<gene>
    <name evidence="1" type="primary">uxuA</name>
    <name type="ordered locus">Sez_0690</name>
</gene>
<name>UXUA_STREM</name>
<protein>
    <recommendedName>
        <fullName evidence="1">Mannonate dehydratase</fullName>
        <ecNumber evidence="1">4.2.1.8</ecNumber>
    </recommendedName>
    <alternativeName>
        <fullName evidence="1">D-mannonate hydro-lyase</fullName>
    </alternativeName>
</protein>
<keyword id="KW-0408">Iron</keyword>
<keyword id="KW-0456">Lyase</keyword>
<keyword id="KW-0464">Manganese</keyword>
<proteinExistence type="inferred from homology"/>
<organism>
    <name type="scientific">Streptococcus equi subsp. zooepidemicus (strain MGCS10565)</name>
    <dbReference type="NCBI Taxonomy" id="552526"/>
    <lineage>
        <taxon>Bacteria</taxon>
        <taxon>Bacillati</taxon>
        <taxon>Bacillota</taxon>
        <taxon>Bacilli</taxon>
        <taxon>Lactobacillales</taxon>
        <taxon>Streptococcaceae</taxon>
        <taxon>Streptococcus</taxon>
    </lineage>
</organism>
<dbReference type="EC" id="4.2.1.8" evidence="1"/>
<dbReference type="EMBL" id="CP001129">
    <property type="protein sequence ID" value="ACG62055.1"/>
    <property type="molecule type" value="Genomic_DNA"/>
</dbReference>
<dbReference type="RefSeq" id="WP_012515331.1">
    <property type="nucleotide sequence ID" value="NC_011134.1"/>
</dbReference>
<dbReference type="SMR" id="B4U238"/>
<dbReference type="KEGG" id="sez:Sez_0690"/>
<dbReference type="HOGENOM" id="CLU_058621_1_0_9"/>
<dbReference type="UniPathway" id="UPA00246"/>
<dbReference type="Proteomes" id="UP000001873">
    <property type="component" value="Chromosome"/>
</dbReference>
<dbReference type="GO" id="GO:0008198">
    <property type="term" value="F:ferrous iron binding"/>
    <property type="evidence" value="ECO:0007669"/>
    <property type="project" value="TreeGrafter"/>
</dbReference>
<dbReference type="GO" id="GO:0030145">
    <property type="term" value="F:manganese ion binding"/>
    <property type="evidence" value="ECO:0007669"/>
    <property type="project" value="TreeGrafter"/>
</dbReference>
<dbReference type="GO" id="GO:0008927">
    <property type="term" value="F:mannonate dehydratase activity"/>
    <property type="evidence" value="ECO:0007669"/>
    <property type="project" value="UniProtKB-UniRule"/>
</dbReference>
<dbReference type="GO" id="GO:0042840">
    <property type="term" value="P:D-glucuronate catabolic process"/>
    <property type="evidence" value="ECO:0007669"/>
    <property type="project" value="TreeGrafter"/>
</dbReference>
<dbReference type="FunFam" id="3.20.20.150:FF:000010">
    <property type="entry name" value="Mannonate dehydratase"/>
    <property type="match status" value="1"/>
</dbReference>
<dbReference type="Gene3D" id="3.20.20.150">
    <property type="entry name" value="Divalent-metal-dependent TIM barrel enzymes"/>
    <property type="match status" value="1"/>
</dbReference>
<dbReference type="HAMAP" id="MF_00106">
    <property type="entry name" value="UxuA"/>
    <property type="match status" value="1"/>
</dbReference>
<dbReference type="InterPro" id="IPR004628">
    <property type="entry name" value="Man_deHydtase"/>
</dbReference>
<dbReference type="InterPro" id="IPR036237">
    <property type="entry name" value="Xyl_isomerase-like_sf"/>
</dbReference>
<dbReference type="NCBIfam" id="NF003027">
    <property type="entry name" value="PRK03906.1"/>
    <property type="match status" value="2"/>
</dbReference>
<dbReference type="PANTHER" id="PTHR30387">
    <property type="entry name" value="MANNONATE DEHYDRATASE"/>
    <property type="match status" value="1"/>
</dbReference>
<dbReference type="PANTHER" id="PTHR30387:SF2">
    <property type="entry name" value="MANNONATE DEHYDRATASE"/>
    <property type="match status" value="1"/>
</dbReference>
<dbReference type="Pfam" id="PF03786">
    <property type="entry name" value="UxuA"/>
    <property type="match status" value="1"/>
</dbReference>
<dbReference type="PIRSF" id="PIRSF016049">
    <property type="entry name" value="Man_dehyd"/>
    <property type="match status" value="1"/>
</dbReference>
<dbReference type="SUPFAM" id="SSF51658">
    <property type="entry name" value="Xylose isomerase-like"/>
    <property type="match status" value="1"/>
</dbReference>
<comment type="function">
    <text evidence="1">Catalyzes the dehydration of D-mannonate.</text>
</comment>
<comment type="catalytic activity">
    <reaction evidence="1">
        <text>D-mannonate = 2-dehydro-3-deoxy-D-gluconate + H2O</text>
        <dbReference type="Rhea" id="RHEA:20097"/>
        <dbReference type="ChEBI" id="CHEBI:15377"/>
        <dbReference type="ChEBI" id="CHEBI:17767"/>
        <dbReference type="ChEBI" id="CHEBI:57990"/>
        <dbReference type="EC" id="4.2.1.8"/>
    </reaction>
</comment>
<comment type="cofactor">
    <cofactor evidence="1">
        <name>Fe(2+)</name>
        <dbReference type="ChEBI" id="CHEBI:29033"/>
    </cofactor>
    <cofactor evidence="1">
        <name>Mn(2+)</name>
        <dbReference type="ChEBI" id="CHEBI:29035"/>
    </cofactor>
</comment>
<comment type="pathway">
    <text evidence="1">Carbohydrate metabolism; pentose and glucuronate interconversion.</text>
</comment>
<comment type="similarity">
    <text evidence="1">Belongs to the mannonate dehydratase family.</text>
</comment>
<feature type="chain" id="PRO_1000094226" description="Mannonate dehydratase">
    <location>
        <begin position="1"/>
        <end position="364"/>
    </location>
</feature>
<reference key="1">
    <citation type="journal article" date="2008" name="PLoS ONE">
        <title>Genome sequence of a lancefield group C Streptococcus zooepidemicus strain causing epidemic nephritis: new information about an old disease.</title>
        <authorList>
            <person name="Beres S.B."/>
            <person name="Sesso R."/>
            <person name="Pinto S.W.L."/>
            <person name="Hoe N.P."/>
            <person name="Porcella S.F."/>
            <person name="Deleo F.R."/>
            <person name="Musser J.M."/>
        </authorList>
    </citation>
    <scope>NUCLEOTIDE SEQUENCE [LARGE SCALE GENOMIC DNA]</scope>
    <source>
        <strain>MGCS10565</strain>
    </source>
</reference>
<accession>B4U238</accession>
<evidence type="ECO:0000255" key="1">
    <source>
        <dbReference type="HAMAP-Rule" id="MF_00106"/>
    </source>
</evidence>
<sequence length="364" mass="40691">MKMSFRWYGKHDPVSLEEIKAIPGMQGIVTAVYDVPVGQAWPLENILELKRTVEAAGLEISVIESIPVHEDIKQGKPNRDELIENYKTSISNVGKAGIPVVCYNFMPVFDWTRSDLNYPLPDGSTSLAFLKADLADVDPVADDLNLPGWDSSYSKEEMKAIIEHYRHHISEEDLWANLDYFIKAIMPTAEAAGVKMAIHPDDPPYGIFGLPRIITGQKAVERFLDLYDSPNNGITMCVGSYASDPQNDVIAMTEYALKRQRINFMHTRNVTAGDWGFQETAHLSQAGDIDMNAIIKLLVDYDWQGPLRPDHGRRIWGDQTKTPGYGLYDRALGATYFNGLYEANMRAAGKTPDFGITVKTVGDK</sequence>